<dbReference type="EC" id="6.1.1.14" evidence="1"/>
<dbReference type="EMBL" id="CP001050">
    <property type="protein sequence ID" value="ACF31228.1"/>
    <property type="molecule type" value="Genomic_DNA"/>
</dbReference>
<dbReference type="RefSeq" id="WP_012504125.1">
    <property type="nucleotide sequence ID" value="NC_011035.1"/>
</dbReference>
<dbReference type="SMR" id="B4RJG3"/>
<dbReference type="KEGG" id="ngk:NGK_2629"/>
<dbReference type="HOGENOM" id="CLU_007220_2_2_4"/>
<dbReference type="Proteomes" id="UP000002564">
    <property type="component" value="Chromosome"/>
</dbReference>
<dbReference type="GO" id="GO:0005829">
    <property type="term" value="C:cytosol"/>
    <property type="evidence" value="ECO:0007669"/>
    <property type="project" value="TreeGrafter"/>
</dbReference>
<dbReference type="GO" id="GO:0004814">
    <property type="term" value="F:arginine-tRNA ligase activity"/>
    <property type="evidence" value="ECO:0007669"/>
    <property type="project" value="InterPro"/>
</dbReference>
<dbReference type="GO" id="GO:0005524">
    <property type="term" value="F:ATP binding"/>
    <property type="evidence" value="ECO:0007669"/>
    <property type="project" value="UniProtKB-UniRule"/>
</dbReference>
<dbReference type="GO" id="GO:0004820">
    <property type="term" value="F:glycine-tRNA ligase activity"/>
    <property type="evidence" value="ECO:0007669"/>
    <property type="project" value="UniProtKB-UniRule"/>
</dbReference>
<dbReference type="GO" id="GO:0006420">
    <property type="term" value="P:arginyl-tRNA aminoacylation"/>
    <property type="evidence" value="ECO:0007669"/>
    <property type="project" value="InterPro"/>
</dbReference>
<dbReference type="GO" id="GO:0006426">
    <property type="term" value="P:glycyl-tRNA aminoacylation"/>
    <property type="evidence" value="ECO:0007669"/>
    <property type="project" value="UniProtKB-UniRule"/>
</dbReference>
<dbReference type="HAMAP" id="MF_00255">
    <property type="entry name" value="Gly_tRNA_synth_beta"/>
    <property type="match status" value="1"/>
</dbReference>
<dbReference type="InterPro" id="IPR008909">
    <property type="entry name" value="DALR_anticod-bd"/>
</dbReference>
<dbReference type="InterPro" id="IPR015944">
    <property type="entry name" value="Gly-tRNA-synth_bsu"/>
</dbReference>
<dbReference type="InterPro" id="IPR006194">
    <property type="entry name" value="Gly-tRNA-synth_heterodimer"/>
</dbReference>
<dbReference type="NCBIfam" id="TIGR00211">
    <property type="entry name" value="glyS"/>
    <property type="match status" value="1"/>
</dbReference>
<dbReference type="PANTHER" id="PTHR30075:SF2">
    <property type="entry name" value="GLYCINE--TRNA LIGASE, CHLOROPLASTIC_MITOCHONDRIAL 2"/>
    <property type="match status" value="1"/>
</dbReference>
<dbReference type="PANTHER" id="PTHR30075">
    <property type="entry name" value="GLYCYL-TRNA SYNTHETASE"/>
    <property type="match status" value="1"/>
</dbReference>
<dbReference type="Pfam" id="PF05746">
    <property type="entry name" value="DALR_1"/>
    <property type="match status" value="1"/>
</dbReference>
<dbReference type="Pfam" id="PF02092">
    <property type="entry name" value="tRNA_synt_2f"/>
    <property type="match status" value="1"/>
</dbReference>
<dbReference type="PRINTS" id="PR01045">
    <property type="entry name" value="TRNASYNTHGB"/>
</dbReference>
<dbReference type="SUPFAM" id="SSF109604">
    <property type="entry name" value="HD-domain/PDEase-like"/>
    <property type="match status" value="1"/>
</dbReference>
<dbReference type="PROSITE" id="PS50861">
    <property type="entry name" value="AA_TRNA_LIGASE_II_GLYAB"/>
    <property type="match status" value="1"/>
</dbReference>
<keyword id="KW-0030">Aminoacyl-tRNA synthetase</keyword>
<keyword id="KW-0067">ATP-binding</keyword>
<keyword id="KW-0963">Cytoplasm</keyword>
<keyword id="KW-0436">Ligase</keyword>
<keyword id="KW-0547">Nucleotide-binding</keyword>
<keyword id="KW-0648">Protein biosynthesis</keyword>
<protein>
    <recommendedName>
        <fullName evidence="1">Glycine--tRNA ligase beta subunit</fullName>
        <ecNumber evidence="1">6.1.1.14</ecNumber>
    </recommendedName>
    <alternativeName>
        <fullName evidence="1">Glycyl-tRNA synthetase beta subunit</fullName>
        <shortName evidence="1">GlyRS</shortName>
    </alternativeName>
</protein>
<name>SYGB_NEIG2</name>
<evidence type="ECO:0000255" key="1">
    <source>
        <dbReference type="HAMAP-Rule" id="MF_00255"/>
    </source>
</evidence>
<sequence length="687" mass="74468">MTTQTLLIELLTEELPPKALNNLGNHFAASVAEGLEKAQLVDGAAEFTAYASPRRLAVQVKNVKAVQADQKIVKKGPAVANAVKDGTPTKALEGFARGAGAKIEDLTIIHDGRQDVYAYEYVQTGRPLGGLLEDIINQAVKKLPIPKVMRWGSSTFTFVRPVHGLIVLHGGDVVNVSVLGLQSGNQTLGHRFLSDGEIIIENADSYAAQMRGQGKVVASFAGRKAAIQTALEGQARRLNATVAADEALLDEVTALVEWPVVLEAGFEEHFLAMPQECLILTMQQNQKYFPLLDQNGKLMNRFLLVSNLQTEDPSHIIRGNERVLRARLSDAEFFYKQDQKATLESRLPKLANVVYHNKIGSQAERIERLQSIAAHIAKALGADAAAAGRAARLAKADLVTEMVGEFPELQGTMGKYYARLDGETEEIAEAIEQHYQPRFAGDKLPESKIAAAVALADKLETLVGIWGIGLIPTGDKDPYALRRAALGILRMLMQYGLDVNELIQTAFDSFPQGLLNEKTPSETADFMQARLAVLLQNDYPQDIVAAVLAKQPRRLDDLTAKLQAVAVFKQLPEAAALAAANKRVQNLLKKADAALGAVNESLLQQDEEKALYAAAQGLQPKIAAAVAEGNFRTALSELASVKPQVDAFFDGVMVMAEDAAVKQNRLNLLNRLAEQMNAVADIALLGE</sequence>
<proteinExistence type="inferred from homology"/>
<feature type="chain" id="PRO_1000101307" description="Glycine--tRNA ligase beta subunit">
    <location>
        <begin position="1"/>
        <end position="687"/>
    </location>
</feature>
<organism>
    <name type="scientific">Neisseria gonorrhoeae (strain NCCP11945)</name>
    <dbReference type="NCBI Taxonomy" id="521006"/>
    <lineage>
        <taxon>Bacteria</taxon>
        <taxon>Pseudomonadati</taxon>
        <taxon>Pseudomonadota</taxon>
        <taxon>Betaproteobacteria</taxon>
        <taxon>Neisseriales</taxon>
        <taxon>Neisseriaceae</taxon>
        <taxon>Neisseria</taxon>
    </lineage>
</organism>
<reference key="1">
    <citation type="journal article" date="2008" name="J. Bacteriol.">
        <title>Complete genome sequence of Neisseria gonorrhoeae NCCP11945.</title>
        <authorList>
            <person name="Chung G.T."/>
            <person name="Yoo J.S."/>
            <person name="Oh H.B."/>
            <person name="Lee Y.S."/>
            <person name="Cha S.H."/>
            <person name="Kim S.J."/>
            <person name="Yoo C.K."/>
        </authorList>
    </citation>
    <scope>NUCLEOTIDE SEQUENCE [LARGE SCALE GENOMIC DNA]</scope>
    <source>
        <strain>NCCP11945</strain>
    </source>
</reference>
<accession>B4RJG3</accession>
<gene>
    <name evidence="1" type="primary">glyS</name>
    <name type="ordered locus">NGK_2629</name>
</gene>
<comment type="catalytic activity">
    <reaction evidence="1">
        <text>tRNA(Gly) + glycine + ATP = glycyl-tRNA(Gly) + AMP + diphosphate</text>
        <dbReference type="Rhea" id="RHEA:16013"/>
        <dbReference type="Rhea" id="RHEA-COMP:9664"/>
        <dbReference type="Rhea" id="RHEA-COMP:9683"/>
        <dbReference type="ChEBI" id="CHEBI:30616"/>
        <dbReference type="ChEBI" id="CHEBI:33019"/>
        <dbReference type="ChEBI" id="CHEBI:57305"/>
        <dbReference type="ChEBI" id="CHEBI:78442"/>
        <dbReference type="ChEBI" id="CHEBI:78522"/>
        <dbReference type="ChEBI" id="CHEBI:456215"/>
        <dbReference type="EC" id="6.1.1.14"/>
    </reaction>
</comment>
<comment type="subunit">
    <text evidence="1">Tetramer of two alpha and two beta subunits.</text>
</comment>
<comment type="subcellular location">
    <subcellularLocation>
        <location evidence="1">Cytoplasm</location>
    </subcellularLocation>
</comment>
<comment type="similarity">
    <text evidence="1">Belongs to the class-II aminoacyl-tRNA synthetase family.</text>
</comment>